<proteinExistence type="inferred from homology"/>
<reference key="1">
    <citation type="journal article" date="2009" name="Genome Res.">
        <title>Newly introduced genomic prophage islands are critical determinants of in vivo competitiveness in the Liverpool epidemic strain of Pseudomonas aeruginosa.</title>
        <authorList>
            <person name="Winstanley C."/>
            <person name="Langille M.G.I."/>
            <person name="Fothergill J.L."/>
            <person name="Kukavica-Ibrulj I."/>
            <person name="Paradis-Bleau C."/>
            <person name="Sanschagrin F."/>
            <person name="Thomson N.R."/>
            <person name="Winsor G.L."/>
            <person name="Quail M.A."/>
            <person name="Lennard N."/>
            <person name="Bignell A."/>
            <person name="Clarke L."/>
            <person name="Seeger K."/>
            <person name="Saunders D."/>
            <person name="Harris D."/>
            <person name="Parkhill J."/>
            <person name="Hancock R.E.W."/>
            <person name="Brinkman F.S.L."/>
            <person name="Levesque R.C."/>
        </authorList>
    </citation>
    <scope>NUCLEOTIDE SEQUENCE [LARGE SCALE GENOMIC DNA]</scope>
    <source>
        <strain>LESB58</strain>
    </source>
</reference>
<sequence length="527" mass="59865">MTTQAAEVAKRRTFAIISHPDAGKTTITEKLLLMGKAIAVAGTVKSRKSDRHATSDWMEMEKQRGISITTSVMQFPYREHMINLLDTPGHEDFSEDTYRTLTAVDSALMVLDGGKGVEPRTIALMEVCRLRDTPIVSFINKLDRDIRDPIELLDEIEAVLKIKAAPITWPIGCYKDFKGVYHLADDRIIVYVPGHGHERIETKVIEKLDSDEARAHLGDLYDNFVEELELVQGACHEFDKDAFLKGEMTPVFFGTALGNFGVDQVLDCIVDWAPQPLSRATHERSVEPTEEKFSGFVFKIQANMDPKHRDRIAFMRICSGKYEKGMKMRHVRLGKDVKIADALTFFSSEREQLEEAYAGDIIGLHNHGTIQIGDTFSEGENFGFTGIPHFAPELFRRVRLKDPLKSKQLRQGLQELAEEGATQVFFPERNNDIILGAVGVLQFDVVASRLKEEYKVECAYEAINVWSARWIECDDEKKLKEFKDKAFENLSVDGGGHLTYLAPTRVNLSLMEERWPDIRFRATREHH</sequence>
<gene>
    <name evidence="1" type="primary">prfC</name>
    <name type="ordered locus">PLES_10741</name>
</gene>
<protein>
    <recommendedName>
        <fullName evidence="1">Peptide chain release factor 3</fullName>
        <shortName evidence="1">RF-3</shortName>
    </recommendedName>
</protein>
<dbReference type="EMBL" id="FM209186">
    <property type="protein sequence ID" value="CAW25801.1"/>
    <property type="molecule type" value="Genomic_DNA"/>
</dbReference>
<dbReference type="RefSeq" id="WP_003093004.1">
    <property type="nucleotide sequence ID" value="NC_011770.1"/>
</dbReference>
<dbReference type="SMR" id="B7VBK5"/>
<dbReference type="KEGG" id="pag:PLES_10741"/>
<dbReference type="HOGENOM" id="CLU_002794_2_1_6"/>
<dbReference type="GO" id="GO:0005829">
    <property type="term" value="C:cytosol"/>
    <property type="evidence" value="ECO:0007669"/>
    <property type="project" value="TreeGrafter"/>
</dbReference>
<dbReference type="GO" id="GO:0005525">
    <property type="term" value="F:GTP binding"/>
    <property type="evidence" value="ECO:0007669"/>
    <property type="project" value="UniProtKB-UniRule"/>
</dbReference>
<dbReference type="GO" id="GO:0003924">
    <property type="term" value="F:GTPase activity"/>
    <property type="evidence" value="ECO:0007669"/>
    <property type="project" value="InterPro"/>
</dbReference>
<dbReference type="GO" id="GO:0097216">
    <property type="term" value="F:guanosine tetraphosphate binding"/>
    <property type="evidence" value="ECO:0007669"/>
    <property type="project" value="UniProtKB-ARBA"/>
</dbReference>
<dbReference type="GO" id="GO:0016150">
    <property type="term" value="F:translation release factor activity, codon nonspecific"/>
    <property type="evidence" value="ECO:0007669"/>
    <property type="project" value="TreeGrafter"/>
</dbReference>
<dbReference type="GO" id="GO:0016149">
    <property type="term" value="F:translation release factor activity, codon specific"/>
    <property type="evidence" value="ECO:0007669"/>
    <property type="project" value="UniProtKB-UniRule"/>
</dbReference>
<dbReference type="GO" id="GO:0006449">
    <property type="term" value="P:regulation of translational termination"/>
    <property type="evidence" value="ECO:0007669"/>
    <property type="project" value="UniProtKB-UniRule"/>
</dbReference>
<dbReference type="CDD" id="cd04169">
    <property type="entry name" value="RF3"/>
    <property type="match status" value="1"/>
</dbReference>
<dbReference type="CDD" id="cd03689">
    <property type="entry name" value="RF3_II"/>
    <property type="match status" value="1"/>
</dbReference>
<dbReference type="CDD" id="cd16259">
    <property type="entry name" value="RF3_III"/>
    <property type="match status" value="1"/>
</dbReference>
<dbReference type="FunFam" id="2.40.30.10:FF:000040">
    <property type="entry name" value="Peptide chain release factor 3"/>
    <property type="match status" value="1"/>
</dbReference>
<dbReference type="FunFam" id="3.30.70.3280:FF:000001">
    <property type="entry name" value="Peptide chain release factor 3"/>
    <property type="match status" value="1"/>
</dbReference>
<dbReference type="FunFam" id="3.40.50.300:FF:000542">
    <property type="entry name" value="Peptide chain release factor 3"/>
    <property type="match status" value="1"/>
</dbReference>
<dbReference type="Gene3D" id="3.40.50.300">
    <property type="entry name" value="P-loop containing nucleotide triphosphate hydrolases"/>
    <property type="match status" value="2"/>
</dbReference>
<dbReference type="Gene3D" id="3.30.70.3280">
    <property type="entry name" value="Peptide chain release factor 3, domain III"/>
    <property type="match status" value="1"/>
</dbReference>
<dbReference type="HAMAP" id="MF_00072">
    <property type="entry name" value="Rel_fac_3"/>
    <property type="match status" value="1"/>
</dbReference>
<dbReference type="InterPro" id="IPR053905">
    <property type="entry name" value="EF-G-like_DII"/>
</dbReference>
<dbReference type="InterPro" id="IPR035647">
    <property type="entry name" value="EFG_III/V"/>
</dbReference>
<dbReference type="InterPro" id="IPR031157">
    <property type="entry name" value="G_TR_CS"/>
</dbReference>
<dbReference type="InterPro" id="IPR027417">
    <property type="entry name" value="P-loop_NTPase"/>
</dbReference>
<dbReference type="InterPro" id="IPR004548">
    <property type="entry name" value="PrfC"/>
</dbReference>
<dbReference type="InterPro" id="IPR032090">
    <property type="entry name" value="RF3_C"/>
</dbReference>
<dbReference type="InterPro" id="IPR038467">
    <property type="entry name" value="RF3_dom_3_sf"/>
</dbReference>
<dbReference type="InterPro" id="IPR041732">
    <property type="entry name" value="RF3_GTP-bd"/>
</dbReference>
<dbReference type="InterPro" id="IPR005225">
    <property type="entry name" value="Small_GTP-bd"/>
</dbReference>
<dbReference type="InterPro" id="IPR000795">
    <property type="entry name" value="T_Tr_GTP-bd_dom"/>
</dbReference>
<dbReference type="InterPro" id="IPR009000">
    <property type="entry name" value="Transl_B-barrel_sf"/>
</dbReference>
<dbReference type="NCBIfam" id="TIGR00503">
    <property type="entry name" value="prfC"/>
    <property type="match status" value="1"/>
</dbReference>
<dbReference type="NCBIfam" id="NF001964">
    <property type="entry name" value="PRK00741.1"/>
    <property type="match status" value="1"/>
</dbReference>
<dbReference type="NCBIfam" id="TIGR00231">
    <property type="entry name" value="small_GTP"/>
    <property type="match status" value="1"/>
</dbReference>
<dbReference type="PANTHER" id="PTHR43556">
    <property type="entry name" value="PEPTIDE CHAIN RELEASE FACTOR RF3"/>
    <property type="match status" value="1"/>
</dbReference>
<dbReference type="PANTHER" id="PTHR43556:SF2">
    <property type="entry name" value="PEPTIDE CHAIN RELEASE FACTOR RF3"/>
    <property type="match status" value="1"/>
</dbReference>
<dbReference type="Pfam" id="PF22042">
    <property type="entry name" value="EF-G_D2"/>
    <property type="match status" value="1"/>
</dbReference>
<dbReference type="Pfam" id="PF00009">
    <property type="entry name" value="GTP_EFTU"/>
    <property type="match status" value="1"/>
</dbReference>
<dbReference type="Pfam" id="PF16658">
    <property type="entry name" value="RF3_C"/>
    <property type="match status" value="1"/>
</dbReference>
<dbReference type="PRINTS" id="PR00315">
    <property type="entry name" value="ELONGATNFCT"/>
</dbReference>
<dbReference type="SUPFAM" id="SSF54980">
    <property type="entry name" value="EF-G C-terminal domain-like"/>
    <property type="match status" value="1"/>
</dbReference>
<dbReference type="SUPFAM" id="SSF52540">
    <property type="entry name" value="P-loop containing nucleoside triphosphate hydrolases"/>
    <property type="match status" value="1"/>
</dbReference>
<dbReference type="SUPFAM" id="SSF50447">
    <property type="entry name" value="Translation proteins"/>
    <property type="match status" value="1"/>
</dbReference>
<dbReference type="PROSITE" id="PS00301">
    <property type="entry name" value="G_TR_1"/>
    <property type="match status" value="1"/>
</dbReference>
<dbReference type="PROSITE" id="PS51722">
    <property type="entry name" value="G_TR_2"/>
    <property type="match status" value="1"/>
</dbReference>
<evidence type="ECO:0000255" key="1">
    <source>
        <dbReference type="HAMAP-Rule" id="MF_00072"/>
    </source>
</evidence>
<keyword id="KW-0963">Cytoplasm</keyword>
<keyword id="KW-0342">GTP-binding</keyword>
<keyword id="KW-0547">Nucleotide-binding</keyword>
<keyword id="KW-0648">Protein biosynthesis</keyword>
<organism>
    <name type="scientific">Pseudomonas aeruginosa (strain LESB58)</name>
    <dbReference type="NCBI Taxonomy" id="557722"/>
    <lineage>
        <taxon>Bacteria</taxon>
        <taxon>Pseudomonadati</taxon>
        <taxon>Pseudomonadota</taxon>
        <taxon>Gammaproteobacteria</taxon>
        <taxon>Pseudomonadales</taxon>
        <taxon>Pseudomonadaceae</taxon>
        <taxon>Pseudomonas</taxon>
    </lineage>
</organism>
<accession>B7VBK5</accession>
<comment type="function">
    <text evidence="1">Increases the formation of ribosomal termination complexes and stimulates activities of RF-1 and RF-2. It binds guanine nucleotides and has strong preference for UGA stop codons. It may interact directly with the ribosome. The stimulation of RF-1 and RF-2 is significantly reduced by GTP and GDP, but not by GMP.</text>
</comment>
<comment type="subcellular location">
    <subcellularLocation>
        <location evidence="1">Cytoplasm</location>
    </subcellularLocation>
</comment>
<comment type="similarity">
    <text evidence="1">Belongs to the TRAFAC class translation factor GTPase superfamily. Classic translation factor GTPase family. PrfC subfamily.</text>
</comment>
<name>RF3_PSEA8</name>
<feature type="chain" id="PRO_1000193532" description="Peptide chain release factor 3">
    <location>
        <begin position="1"/>
        <end position="527"/>
    </location>
</feature>
<feature type="domain" description="tr-type G">
    <location>
        <begin position="9"/>
        <end position="277"/>
    </location>
</feature>
<feature type="binding site" evidence="1">
    <location>
        <begin position="18"/>
        <end position="25"/>
    </location>
    <ligand>
        <name>GTP</name>
        <dbReference type="ChEBI" id="CHEBI:37565"/>
    </ligand>
</feature>
<feature type="binding site" evidence="1">
    <location>
        <begin position="86"/>
        <end position="90"/>
    </location>
    <ligand>
        <name>GTP</name>
        <dbReference type="ChEBI" id="CHEBI:37565"/>
    </ligand>
</feature>
<feature type="binding site" evidence="1">
    <location>
        <begin position="140"/>
        <end position="143"/>
    </location>
    <ligand>
        <name>GTP</name>
        <dbReference type="ChEBI" id="CHEBI:37565"/>
    </ligand>
</feature>